<reference key="1">
    <citation type="journal article" date="2002" name="Environ. Microbiol.">
        <title>Complete genome sequence and comparative analysis of the metabolically versatile Pseudomonas putida KT2440.</title>
        <authorList>
            <person name="Nelson K.E."/>
            <person name="Weinel C."/>
            <person name="Paulsen I.T."/>
            <person name="Dodson R.J."/>
            <person name="Hilbert H."/>
            <person name="Martins dos Santos V.A.P."/>
            <person name="Fouts D.E."/>
            <person name="Gill S.R."/>
            <person name="Pop M."/>
            <person name="Holmes M."/>
            <person name="Brinkac L.M."/>
            <person name="Beanan M.J."/>
            <person name="DeBoy R.T."/>
            <person name="Daugherty S.C."/>
            <person name="Kolonay J.F."/>
            <person name="Madupu R."/>
            <person name="Nelson W.C."/>
            <person name="White O."/>
            <person name="Peterson J.D."/>
            <person name="Khouri H.M."/>
            <person name="Hance I."/>
            <person name="Chris Lee P."/>
            <person name="Holtzapple E.K."/>
            <person name="Scanlan D."/>
            <person name="Tran K."/>
            <person name="Moazzez A."/>
            <person name="Utterback T.R."/>
            <person name="Rizzo M."/>
            <person name="Lee K."/>
            <person name="Kosack D."/>
            <person name="Moestl D."/>
            <person name="Wedler H."/>
            <person name="Lauber J."/>
            <person name="Stjepandic D."/>
            <person name="Hoheisel J."/>
            <person name="Straetz M."/>
            <person name="Heim S."/>
            <person name="Kiewitz C."/>
            <person name="Eisen J.A."/>
            <person name="Timmis K.N."/>
            <person name="Duesterhoeft A."/>
            <person name="Tuemmler B."/>
            <person name="Fraser C.M."/>
        </authorList>
    </citation>
    <scope>NUCLEOTIDE SEQUENCE [LARGE SCALE GENOMIC DNA]</scope>
    <source>
        <strain>ATCC 47054 / DSM 6125 / CFBP 8728 / NCIMB 11950 / KT2440</strain>
    </source>
</reference>
<reference key="2">
    <citation type="journal article" date="2011" name="Mol. Microbiol.">
        <title>Unravelling the gallic acid degradation pathway in bacteria: the gal cluster from Pseudomonas putida.</title>
        <authorList>
            <person name="Nogales J."/>
            <person name="Canales A."/>
            <person name="Jimenez-Barbero J."/>
            <person name="Serra B."/>
            <person name="Pingarron J.M."/>
            <person name="Garcia J.L."/>
            <person name="Diaz E."/>
        </authorList>
    </citation>
    <scope>FUNCTION</scope>
    <scope>CATALYTIC ACTIVITY</scope>
    <scope>PATHWAY</scope>
    <scope>DISRUPTION PHENOTYPE</scope>
    <source>
        <strain>ATCC 47054 / DSM 6125 / CFBP 8728 / NCIMB 11950 / KT2440</strain>
    </source>
</reference>
<proteinExistence type="evidence at protein level"/>
<comment type="function">
    <text evidence="1">Catalyzes the tautomerization of the 4-oxalomesaconic acid keto (OMAketo) generated by GalA dioxygenase to 4-oxalomesaconic acid enol (OMAenol). Mediates the second step in gallate degradation pathway.</text>
</comment>
<comment type="catalytic activity">
    <reaction evidence="1">
        <text>(1E)-4-oxobut-1-ene-1,2,4-tricarboxylate = 4-carboxy-2-hydroxy-cis,cis-muconate</text>
        <dbReference type="Rhea" id="RHEA:28931"/>
        <dbReference type="ChEBI" id="CHEBI:57471"/>
        <dbReference type="ChEBI" id="CHEBI:58142"/>
        <dbReference type="EC" id="5.3.2.8"/>
    </reaction>
</comment>
<comment type="disruption phenotype">
    <text evidence="1">Does not prevent growth in 5 mM gallate medium, but the mutant strain grows poorly at gallate concentrations lower than 2 mM.</text>
</comment>
<comment type="similarity">
    <text evidence="2">Belongs to the PrpF family.</text>
</comment>
<feature type="chain" id="PRO_0000418496" description="4-oxalomesaconate tautomerase">
    <location>
        <begin position="1"/>
        <end position="361"/>
    </location>
</feature>
<sequence>MGQTRIPCLLMRGGTSKGAYFLHDDLPAPGPLRDRVLLAVMGSPDARQIDGIGGADSLTSKVAIIRASQRDDADVDYLFAQVVVDEARVDYGQNCGNILAGVGPFALERGLVAASGASTPVRIFMENTGQIAVAQVPTADGQVEYAGDTRIDGVPGRAAALVVTFADVAGASCGALLPTGNSRDCVEGVEVTCIDNGMPVVLLCAEDLGVTGYEPCETLEADSALKTRLEAIRLQLGPRMNLGDVSQRNVPKMCLLSAPRNGGTVNTRSFIPHRCHASIGVFGAVSVATACLIEGSVAQGLASTSGGDRQRLAVEHPSGEFTVEISLEHGVIKGCGLVRTARLLFDGVVCIGRDTWGGPEK</sequence>
<accession>Q88JY0</accession>
<evidence type="ECO:0000269" key="1">
    <source>
    </source>
</evidence>
<evidence type="ECO:0000305" key="2"/>
<keyword id="KW-0058">Aromatic hydrocarbons catabolism</keyword>
<keyword id="KW-0413">Isomerase</keyword>
<keyword id="KW-1185">Reference proteome</keyword>
<name>GALD_PSEPK</name>
<organism>
    <name type="scientific">Pseudomonas putida (strain ATCC 47054 / DSM 6125 / CFBP 8728 / NCIMB 11950 / KT2440)</name>
    <dbReference type="NCBI Taxonomy" id="160488"/>
    <lineage>
        <taxon>Bacteria</taxon>
        <taxon>Pseudomonadati</taxon>
        <taxon>Pseudomonadota</taxon>
        <taxon>Gammaproteobacteria</taxon>
        <taxon>Pseudomonadales</taxon>
        <taxon>Pseudomonadaceae</taxon>
        <taxon>Pseudomonas</taxon>
    </lineage>
</organism>
<dbReference type="EC" id="5.3.2.8"/>
<dbReference type="EMBL" id="AE015451">
    <property type="protein sequence ID" value="AAN68125.1"/>
    <property type="molecule type" value="Genomic_DNA"/>
</dbReference>
<dbReference type="RefSeq" id="NP_744661.1">
    <property type="nucleotide sequence ID" value="NC_002947.4"/>
</dbReference>
<dbReference type="RefSeq" id="WP_010953447.1">
    <property type="nucleotide sequence ID" value="NZ_CP169744.1"/>
</dbReference>
<dbReference type="SMR" id="Q88JY0"/>
<dbReference type="STRING" id="160488.PP_2513"/>
<dbReference type="PaxDb" id="160488-PP_2513"/>
<dbReference type="KEGG" id="ppu:PP_2513"/>
<dbReference type="PATRIC" id="fig|160488.4.peg.2668"/>
<dbReference type="eggNOG" id="COG2828">
    <property type="taxonomic scope" value="Bacteria"/>
</dbReference>
<dbReference type="HOGENOM" id="CLU_026443_2_1_6"/>
<dbReference type="OrthoDB" id="9779763at2"/>
<dbReference type="PhylomeDB" id="Q88JY0"/>
<dbReference type="BioCyc" id="MetaCyc:G1G01-2697-MONOMER"/>
<dbReference type="BioCyc" id="PPUT160488:G1G01-2697-MONOMER"/>
<dbReference type="Proteomes" id="UP000000556">
    <property type="component" value="Chromosome"/>
</dbReference>
<dbReference type="GO" id="GO:0016863">
    <property type="term" value="F:intramolecular oxidoreductase activity, transposing C=C bonds"/>
    <property type="evidence" value="ECO:0000314"/>
    <property type="project" value="UniProtKB"/>
</dbReference>
<dbReference type="GO" id="GO:0019396">
    <property type="term" value="P:gallate catabolic process"/>
    <property type="evidence" value="ECO:0000314"/>
    <property type="project" value="UniProtKB"/>
</dbReference>
<dbReference type="FunFam" id="3.10.310.10:FF:000042">
    <property type="entry name" value="4-oxalomesaconate tautomerase"/>
    <property type="match status" value="1"/>
</dbReference>
<dbReference type="Gene3D" id="3.10.310.10">
    <property type="entry name" value="Diaminopimelate Epimerase, Chain A, domain 1"/>
    <property type="match status" value="2"/>
</dbReference>
<dbReference type="InterPro" id="IPR047687">
    <property type="entry name" value="OMA_tautomer-like"/>
</dbReference>
<dbReference type="InterPro" id="IPR007400">
    <property type="entry name" value="PrpF-like"/>
</dbReference>
<dbReference type="NCBIfam" id="NF033377">
    <property type="entry name" value="OMA_tautomer"/>
    <property type="match status" value="1"/>
</dbReference>
<dbReference type="PANTHER" id="PTHR43709">
    <property type="entry name" value="ACONITATE ISOMERASE-RELATED"/>
    <property type="match status" value="1"/>
</dbReference>
<dbReference type="PANTHER" id="PTHR43709:SF3">
    <property type="entry name" value="ISOMERASE YBHH-RELATED"/>
    <property type="match status" value="1"/>
</dbReference>
<dbReference type="Pfam" id="PF04303">
    <property type="entry name" value="PrpF"/>
    <property type="match status" value="1"/>
</dbReference>
<dbReference type="SUPFAM" id="SSF54506">
    <property type="entry name" value="Diaminopimelate epimerase-like"/>
    <property type="match status" value="2"/>
</dbReference>
<protein>
    <recommendedName>
        <fullName>4-oxalomesaconate tautomerase</fullName>
        <ecNumber>5.3.2.8</ecNumber>
    </recommendedName>
    <alternativeName>
        <fullName>Gallate degradation protein D</fullName>
    </alternativeName>
</protein>
<gene>
    <name type="primary">galD</name>
    <name type="ordered locus">PP_2513</name>
</gene>